<name>TRPA_YERPY</name>
<proteinExistence type="inferred from homology"/>
<sequence>MERYQQLFKQLAAKKEGAFVPFVQLGDPSPAMSLNIIDTLIAAGADALELGIPFSDPLADGPTIQNAALRAFAAGVTPAICFEILAEIRQKHPTIPIGLLMYANLVFHNGIDHFYQRCAEVGVDSVLIADVPFEESAPFRAAALRHGIAPIFICPPNADGDLLREIASHGRGYTYLLSRAGVTGAENHGQLPLNHLVDKLREYNAAPALQGFGISEPAQVKASLAAGAAGAISGSAIVKIIEKNVAQPVEMLVQLTRFVTEMKAATRS</sequence>
<gene>
    <name evidence="1" type="primary">trpA</name>
    <name type="ordered locus">YPK_2047</name>
</gene>
<protein>
    <recommendedName>
        <fullName evidence="1">Tryptophan synthase alpha chain</fullName>
        <ecNumber evidence="1">4.2.1.20</ecNumber>
    </recommendedName>
</protein>
<organism>
    <name type="scientific">Yersinia pseudotuberculosis serotype O:3 (strain YPIII)</name>
    <dbReference type="NCBI Taxonomy" id="502800"/>
    <lineage>
        <taxon>Bacteria</taxon>
        <taxon>Pseudomonadati</taxon>
        <taxon>Pseudomonadota</taxon>
        <taxon>Gammaproteobacteria</taxon>
        <taxon>Enterobacterales</taxon>
        <taxon>Yersiniaceae</taxon>
        <taxon>Yersinia</taxon>
    </lineage>
</organism>
<keyword id="KW-0028">Amino-acid biosynthesis</keyword>
<keyword id="KW-0057">Aromatic amino acid biosynthesis</keyword>
<keyword id="KW-0456">Lyase</keyword>
<keyword id="KW-0822">Tryptophan biosynthesis</keyword>
<evidence type="ECO:0000255" key="1">
    <source>
        <dbReference type="HAMAP-Rule" id="MF_00131"/>
    </source>
</evidence>
<accession>B1JKS3</accession>
<reference key="1">
    <citation type="submission" date="2008-02" db="EMBL/GenBank/DDBJ databases">
        <title>Complete sequence of Yersinia pseudotuberculosis YPIII.</title>
        <authorList>
            <consortium name="US DOE Joint Genome Institute"/>
            <person name="Copeland A."/>
            <person name="Lucas S."/>
            <person name="Lapidus A."/>
            <person name="Glavina del Rio T."/>
            <person name="Dalin E."/>
            <person name="Tice H."/>
            <person name="Bruce D."/>
            <person name="Goodwin L."/>
            <person name="Pitluck S."/>
            <person name="Munk A.C."/>
            <person name="Brettin T."/>
            <person name="Detter J.C."/>
            <person name="Han C."/>
            <person name="Tapia R."/>
            <person name="Schmutz J."/>
            <person name="Larimer F."/>
            <person name="Land M."/>
            <person name="Hauser L."/>
            <person name="Challacombe J.F."/>
            <person name="Green L."/>
            <person name="Lindler L.E."/>
            <person name="Nikolich M.P."/>
            <person name="Richardson P."/>
        </authorList>
    </citation>
    <scope>NUCLEOTIDE SEQUENCE [LARGE SCALE GENOMIC DNA]</scope>
    <source>
        <strain>YPIII</strain>
    </source>
</reference>
<comment type="function">
    <text evidence="1">The alpha subunit is responsible for the aldol cleavage of indoleglycerol phosphate to indole and glyceraldehyde 3-phosphate.</text>
</comment>
<comment type="catalytic activity">
    <reaction evidence="1">
        <text>(1S,2R)-1-C-(indol-3-yl)glycerol 3-phosphate + L-serine = D-glyceraldehyde 3-phosphate + L-tryptophan + H2O</text>
        <dbReference type="Rhea" id="RHEA:10532"/>
        <dbReference type="ChEBI" id="CHEBI:15377"/>
        <dbReference type="ChEBI" id="CHEBI:33384"/>
        <dbReference type="ChEBI" id="CHEBI:57912"/>
        <dbReference type="ChEBI" id="CHEBI:58866"/>
        <dbReference type="ChEBI" id="CHEBI:59776"/>
        <dbReference type="EC" id="4.2.1.20"/>
    </reaction>
</comment>
<comment type="pathway">
    <text evidence="1">Amino-acid biosynthesis; L-tryptophan biosynthesis; L-tryptophan from chorismate: step 5/5.</text>
</comment>
<comment type="subunit">
    <text evidence="1">Tetramer of two alpha and two beta chains.</text>
</comment>
<comment type="similarity">
    <text evidence="1">Belongs to the TrpA family.</text>
</comment>
<dbReference type="EC" id="4.2.1.20" evidence="1"/>
<dbReference type="EMBL" id="CP000950">
    <property type="protein sequence ID" value="ACA68334.1"/>
    <property type="molecule type" value="Genomic_DNA"/>
</dbReference>
<dbReference type="RefSeq" id="WP_012304087.1">
    <property type="nucleotide sequence ID" value="NZ_CP009792.1"/>
</dbReference>
<dbReference type="SMR" id="B1JKS3"/>
<dbReference type="KEGG" id="ypy:YPK_2047"/>
<dbReference type="PATRIC" id="fig|502800.11.peg.2725"/>
<dbReference type="UniPathway" id="UPA00035">
    <property type="reaction ID" value="UER00044"/>
</dbReference>
<dbReference type="GO" id="GO:0005829">
    <property type="term" value="C:cytosol"/>
    <property type="evidence" value="ECO:0007669"/>
    <property type="project" value="TreeGrafter"/>
</dbReference>
<dbReference type="GO" id="GO:0004834">
    <property type="term" value="F:tryptophan synthase activity"/>
    <property type="evidence" value="ECO:0007669"/>
    <property type="project" value="UniProtKB-UniRule"/>
</dbReference>
<dbReference type="CDD" id="cd04724">
    <property type="entry name" value="Tryptophan_synthase_alpha"/>
    <property type="match status" value="1"/>
</dbReference>
<dbReference type="FunFam" id="3.20.20.70:FF:000037">
    <property type="entry name" value="Tryptophan synthase alpha chain"/>
    <property type="match status" value="1"/>
</dbReference>
<dbReference type="Gene3D" id="3.20.20.70">
    <property type="entry name" value="Aldolase class I"/>
    <property type="match status" value="1"/>
</dbReference>
<dbReference type="HAMAP" id="MF_00131">
    <property type="entry name" value="Trp_synth_alpha"/>
    <property type="match status" value="1"/>
</dbReference>
<dbReference type="InterPro" id="IPR013785">
    <property type="entry name" value="Aldolase_TIM"/>
</dbReference>
<dbReference type="InterPro" id="IPR011060">
    <property type="entry name" value="RibuloseP-bd_barrel"/>
</dbReference>
<dbReference type="InterPro" id="IPR018204">
    <property type="entry name" value="Trp_synthase_alpha_AS"/>
</dbReference>
<dbReference type="InterPro" id="IPR002028">
    <property type="entry name" value="Trp_synthase_suA"/>
</dbReference>
<dbReference type="NCBIfam" id="TIGR00262">
    <property type="entry name" value="trpA"/>
    <property type="match status" value="1"/>
</dbReference>
<dbReference type="PANTHER" id="PTHR43406:SF1">
    <property type="entry name" value="TRYPTOPHAN SYNTHASE ALPHA CHAIN, CHLOROPLASTIC"/>
    <property type="match status" value="1"/>
</dbReference>
<dbReference type="PANTHER" id="PTHR43406">
    <property type="entry name" value="TRYPTOPHAN SYNTHASE, ALPHA CHAIN"/>
    <property type="match status" value="1"/>
</dbReference>
<dbReference type="Pfam" id="PF00290">
    <property type="entry name" value="Trp_syntA"/>
    <property type="match status" value="1"/>
</dbReference>
<dbReference type="SUPFAM" id="SSF51366">
    <property type="entry name" value="Ribulose-phoshate binding barrel"/>
    <property type="match status" value="1"/>
</dbReference>
<dbReference type="PROSITE" id="PS00167">
    <property type="entry name" value="TRP_SYNTHASE_ALPHA"/>
    <property type="match status" value="1"/>
</dbReference>
<feature type="chain" id="PRO_1000095767" description="Tryptophan synthase alpha chain">
    <location>
        <begin position="1"/>
        <end position="268"/>
    </location>
</feature>
<feature type="active site" description="Proton acceptor" evidence="1">
    <location>
        <position position="49"/>
    </location>
</feature>
<feature type="active site" description="Proton acceptor" evidence="1">
    <location>
        <position position="60"/>
    </location>
</feature>